<organism>
    <name type="scientific">Thermococcus onnurineus (strain NA1)</name>
    <dbReference type="NCBI Taxonomy" id="523850"/>
    <lineage>
        <taxon>Archaea</taxon>
        <taxon>Methanobacteriati</taxon>
        <taxon>Methanobacteriota</taxon>
        <taxon>Thermococci</taxon>
        <taxon>Thermococcales</taxon>
        <taxon>Thermococcaceae</taxon>
        <taxon>Thermococcus</taxon>
    </lineage>
</organism>
<feature type="chain" id="PRO_1000124005" description="Pyrrolidone-carboxylate peptidase">
    <location>
        <begin position="1"/>
        <end position="200"/>
    </location>
</feature>
<feature type="active site" evidence="1">
    <location>
        <position position="78"/>
    </location>
</feature>
<feature type="active site" evidence="1">
    <location>
        <position position="141"/>
    </location>
</feature>
<feature type="active site" evidence="1">
    <location>
        <position position="165"/>
    </location>
</feature>
<sequence length="200" mass="21840">MKVLITGFEPFGGEEINPSWEAVRRLPDEIAGAELIKRQLPVTFRGVRELLPRLIVETKPDLVILTGQAGGRPNITVERVAINVMDSTMPDNEGYTPEDEPIFEGAPDAYFATLPIKAIVKALREAKIPAAVSNTAGTYVCNTAMYTVLHTIAVAGMETKAGFIHVPFIHEQALDKPRPSMALETVVKAYEVIIKTSLKA</sequence>
<proteinExistence type="inferred from homology"/>
<keyword id="KW-0963">Cytoplasm</keyword>
<keyword id="KW-0378">Hydrolase</keyword>
<keyword id="KW-0645">Protease</keyword>
<keyword id="KW-0788">Thiol protease</keyword>
<gene>
    <name evidence="1" type="primary">pcp</name>
    <name type="ordered locus">TON_1690</name>
</gene>
<protein>
    <recommendedName>
        <fullName evidence="1">Pyrrolidone-carboxylate peptidase</fullName>
        <ecNumber evidence="1">3.4.19.3</ecNumber>
    </recommendedName>
    <alternativeName>
        <fullName evidence="1">5-oxoprolyl-peptidase</fullName>
    </alternativeName>
    <alternativeName>
        <fullName evidence="1">Pyroglutamyl-peptidase I</fullName>
        <shortName evidence="1">PGP-I</shortName>
        <shortName evidence="1">Pyrase</shortName>
    </alternativeName>
</protein>
<comment type="function">
    <text evidence="1">Removes 5-oxoproline from various penultimate amino acid residues except L-proline.</text>
</comment>
<comment type="catalytic activity">
    <reaction evidence="1">
        <text>Release of an N-terminal pyroglutamyl group from a polypeptide, the second amino acid generally not being Pro.</text>
        <dbReference type="EC" id="3.4.19.3"/>
    </reaction>
</comment>
<comment type="subunit">
    <text evidence="1">Homotetramer.</text>
</comment>
<comment type="subcellular location">
    <subcellularLocation>
        <location evidence="1">Cytoplasm</location>
    </subcellularLocation>
</comment>
<comment type="similarity">
    <text evidence="1">Belongs to the peptidase C15 family.</text>
</comment>
<accession>B6YUJ5</accession>
<reference key="1">
    <citation type="journal article" date="2008" name="J. Bacteriol.">
        <title>The complete genome sequence of Thermococcus onnurineus NA1 reveals a mixed heterotrophic and carboxydotrophic metabolism.</title>
        <authorList>
            <person name="Lee H.S."/>
            <person name="Kang S.G."/>
            <person name="Bae S.S."/>
            <person name="Lim J.K."/>
            <person name="Cho Y."/>
            <person name="Kim Y.J."/>
            <person name="Jeon J.H."/>
            <person name="Cha S.-S."/>
            <person name="Kwon K.K."/>
            <person name="Kim H.-T."/>
            <person name="Park C.-J."/>
            <person name="Lee H.-W."/>
            <person name="Kim S.I."/>
            <person name="Chun J."/>
            <person name="Colwell R.R."/>
            <person name="Kim S.-J."/>
            <person name="Lee J.-H."/>
        </authorList>
    </citation>
    <scope>NUCLEOTIDE SEQUENCE [LARGE SCALE GENOMIC DNA]</scope>
    <source>
        <strain>NA1</strain>
    </source>
</reference>
<evidence type="ECO:0000255" key="1">
    <source>
        <dbReference type="HAMAP-Rule" id="MF_00417"/>
    </source>
</evidence>
<name>PCP_THEON</name>
<dbReference type="EC" id="3.4.19.3" evidence="1"/>
<dbReference type="EMBL" id="CP000855">
    <property type="protein sequence ID" value="ACJ17180.1"/>
    <property type="molecule type" value="Genomic_DNA"/>
</dbReference>
<dbReference type="RefSeq" id="WP_012572652.1">
    <property type="nucleotide sequence ID" value="NC_011529.1"/>
</dbReference>
<dbReference type="SMR" id="B6YUJ5"/>
<dbReference type="STRING" id="523850.TON_1690"/>
<dbReference type="MEROPS" id="C15.001"/>
<dbReference type="GeneID" id="7017359"/>
<dbReference type="KEGG" id="ton:TON_1690"/>
<dbReference type="PATRIC" id="fig|523850.10.peg.1703"/>
<dbReference type="eggNOG" id="arCOG05850">
    <property type="taxonomic scope" value="Archaea"/>
</dbReference>
<dbReference type="HOGENOM" id="CLU_043960_4_0_2"/>
<dbReference type="OrthoDB" id="39672at2157"/>
<dbReference type="Proteomes" id="UP000002727">
    <property type="component" value="Chromosome"/>
</dbReference>
<dbReference type="GO" id="GO:0005829">
    <property type="term" value="C:cytosol"/>
    <property type="evidence" value="ECO:0007669"/>
    <property type="project" value="InterPro"/>
</dbReference>
<dbReference type="GO" id="GO:0016920">
    <property type="term" value="F:pyroglutamyl-peptidase activity"/>
    <property type="evidence" value="ECO:0007669"/>
    <property type="project" value="UniProtKB-UniRule"/>
</dbReference>
<dbReference type="GO" id="GO:0006508">
    <property type="term" value="P:proteolysis"/>
    <property type="evidence" value="ECO:0007669"/>
    <property type="project" value="UniProtKB-KW"/>
</dbReference>
<dbReference type="CDD" id="cd00501">
    <property type="entry name" value="Peptidase_C15"/>
    <property type="match status" value="1"/>
</dbReference>
<dbReference type="FunFam" id="3.40.630.20:FF:000001">
    <property type="entry name" value="Pyrrolidone-carboxylate peptidase"/>
    <property type="match status" value="1"/>
</dbReference>
<dbReference type="Gene3D" id="3.40.630.20">
    <property type="entry name" value="Peptidase C15, pyroglutamyl peptidase I-like"/>
    <property type="match status" value="1"/>
</dbReference>
<dbReference type="HAMAP" id="MF_00417">
    <property type="entry name" value="Pyrrolid_peptidase"/>
    <property type="match status" value="1"/>
</dbReference>
<dbReference type="InterPro" id="IPR000816">
    <property type="entry name" value="Peptidase_C15"/>
</dbReference>
<dbReference type="InterPro" id="IPR016125">
    <property type="entry name" value="Peptidase_C15-like"/>
</dbReference>
<dbReference type="InterPro" id="IPR036440">
    <property type="entry name" value="Peptidase_C15-like_sf"/>
</dbReference>
<dbReference type="InterPro" id="IPR029762">
    <property type="entry name" value="PGP-I_bact-type"/>
</dbReference>
<dbReference type="InterPro" id="IPR033694">
    <property type="entry name" value="PGPEP1_Cys_AS"/>
</dbReference>
<dbReference type="InterPro" id="IPR033693">
    <property type="entry name" value="PGPEP1_Glu_AS"/>
</dbReference>
<dbReference type="NCBIfam" id="NF009676">
    <property type="entry name" value="PRK13197.1"/>
    <property type="match status" value="1"/>
</dbReference>
<dbReference type="NCBIfam" id="TIGR00504">
    <property type="entry name" value="pyro_pdase"/>
    <property type="match status" value="1"/>
</dbReference>
<dbReference type="PANTHER" id="PTHR23402">
    <property type="entry name" value="PROTEASE FAMILY C15 PYROGLUTAMYL-PEPTIDASE I-RELATED"/>
    <property type="match status" value="1"/>
</dbReference>
<dbReference type="PANTHER" id="PTHR23402:SF1">
    <property type="entry name" value="PYROGLUTAMYL-PEPTIDASE I"/>
    <property type="match status" value="1"/>
</dbReference>
<dbReference type="Pfam" id="PF01470">
    <property type="entry name" value="Peptidase_C15"/>
    <property type="match status" value="1"/>
</dbReference>
<dbReference type="PIRSF" id="PIRSF015592">
    <property type="entry name" value="Prld-crbxl_pptds"/>
    <property type="match status" value="1"/>
</dbReference>
<dbReference type="PRINTS" id="PR00706">
    <property type="entry name" value="PYROGLUPTASE"/>
</dbReference>
<dbReference type="SUPFAM" id="SSF53182">
    <property type="entry name" value="Pyrrolidone carboxyl peptidase (pyroglutamate aminopeptidase)"/>
    <property type="match status" value="1"/>
</dbReference>
<dbReference type="PROSITE" id="PS01334">
    <property type="entry name" value="PYRASE_CYS"/>
    <property type="match status" value="1"/>
</dbReference>
<dbReference type="PROSITE" id="PS01333">
    <property type="entry name" value="PYRASE_GLU"/>
    <property type="match status" value="1"/>
</dbReference>